<protein>
    <recommendedName>
        <fullName>Cholecystokinin</fullName>
        <shortName>CCK</shortName>
    </recommendedName>
</protein>
<accession>P0C229</accession>
<keyword id="KW-0027">Amidation</keyword>
<keyword id="KW-0903">Direct protein sequencing</keyword>
<keyword id="KW-0372">Hormone</keyword>
<keyword id="KW-0964">Secreted</keyword>
<keyword id="KW-0765">Sulfation</keyword>
<name>CCKN_MACGI</name>
<gene>
    <name type="primary">CCK</name>
</gene>
<sequence length="8" mass="1064">DYMGWMDF</sequence>
<dbReference type="GO" id="GO:0005576">
    <property type="term" value="C:extracellular region"/>
    <property type="evidence" value="ECO:0007669"/>
    <property type="project" value="UniProtKB-SubCell"/>
</dbReference>
<dbReference type="GO" id="GO:0005179">
    <property type="term" value="F:hormone activity"/>
    <property type="evidence" value="ECO:0007669"/>
    <property type="project" value="UniProtKB-KW"/>
</dbReference>
<dbReference type="InterPro" id="IPR013152">
    <property type="entry name" value="Gastrin/cholecystokinin_CS"/>
</dbReference>
<dbReference type="PROSITE" id="PS00259">
    <property type="entry name" value="GASTRIN"/>
    <property type="match status" value="1"/>
</dbReference>
<evidence type="ECO:0000250" key="1">
    <source>
        <dbReference type="UniProtKB" id="Q9TS44"/>
    </source>
</evidence>
<evidence type="ECO:0000269" key="2">
    <source>
    </source>
</evidence>
<evidence type="ECO:0000305" key="3"/>
<evidence type="ECO:0000305" key="4">
    <source>
    </source>
</evidence>
<feature type="peptide" id="PRO_0000260279" description="Cholecystokinin">
    <location>
        <begin position="1"/>
        <end position="8"/>
    </location>
</feature>
<feature type="modified residue" description="Sulfotyrosine" evidence="2">
    <location>
        <position position="2"/>
    </location>
</feature>
<feature type="modified residue" description="Phenylalanine amide" evidence="2">
    <location>
        <position position="8"/>
    </location>
</feature>
<proteinExistence type="evidence at protein level"/>
<comment type="function">
    <text evidence="1">This peptide hormone induces gall bladder contraction and the release of pancreatic enzymes in the gut. Its function in the brain is not clear. Binding to CCK-A receptors stimulates amylase release from the pancreas, binding to CCK-B receptors stimulates gastric acid secretion.</text>
</comment>
<comment type="subunit">
    <text evidence="1">Binds to CCK-A receptors in the pancreas and CCK-B receptors in the brain.</text>
</comment>
<comment type="subcellular location">
    <subcellularLocation>
        <location evidence="4">Secreted</location>
    </subcellularLocation>
</comment>
<comment type="similarity">
    <text evidence="3">Belongs to the gastrin/cholecystokinin family.</text>
</comment>
<organism>
    <name type="scientific">Macropus giganteus</name>
    <name type="common">Eastern gray kangaroo</name>
    <dbReference type="NCBI Taxonomy" id="9317"/>
    <lineage>
        <taxon>Eukaryota</taxon>
        <taxon>Metazoa</taxon>
        <taxon>Chordata</taxon>
        <taxon>Craniata</taxon>
        <taxon>Vertebrata</taxon>
        <taxon>Euteleostomi</taxon>
        <taxon>Mammalia</taxon>
        <taxon>Metatheria</taxon>
        <taxon>Diprotodontia</taxon>
        <taxon>Macropodidae</taxon>
        <taxon>Macropus</taxon>
    </lineage>
</organism>
<reference key="1">
    <citation type="journal article" date="1993" name="Peptides">
        <title>Gastrin and cholecystokinin in the Eastern Grey kangaroo, Macropus giganteus giganteus.</title>
        <authorList>
            <person name="Johnsen A.H."/>
            <person name="Shulkes A."/>
        </authorList>
    </citation>
    <scope>PROTEIN SEQUENCE</scope>
    <scope>SULFATION AT TYR-2</scope>
    <scope>AMIDATION AT PHE-8</scope>
    <source>
        <tissue>Brain</tissue>
    </source>
</reference>